<organism>
    <name type="scientific">Yersinia pestis bv. Antiqua (strain Angola)</name>
    <dbReference type="NCBI Taxonomy" id="349746"/>
    <lineage>
        <taxon>Bacteria</taxon>
        <taxon>Pseudomonadati</taxon>
        <taxon>Pseudomonadota</taxon>
        <taxon>Gammaproteobacteria</taxon>
        <taxon>Enterobacterales</taxon>
        <taxon>Yersiniaceae</taxon>
        <taxon>Yersinia</taxon>
    </lineage>
</organism>
<feature type="chain" id="PRO_1000127623" description="L-arabinose isomerase">
    <location>
        <begin position="1"/>
        <end position="500"/>
    </location>
</feature>
<feature type="binding site" evidence="1">
    <location>
        <position position="306"/>
    </location>
    <ligand>
        <name>Mn(2+)</name>
        <dbReference type="ChEBI" id="CHEBI:29035"/>
    </ligand>
</feature>
<feature type="binding site" evidence="1">
    <location>
        <position position="333"/>
    </location>
    <ligand>
        <name>Mn(2+)</name>
        <dbReference type="ChEBI" id="CHEBI:29035"/>
    </ligand>
</feature>
<feature type="binding site" evidence="1">
    <location>
        <position position="350"/>
    </location>
    <ligand>
        <name>Mn(2+)</name>
        <dbReference type="ChEBI" id="CHEBI:29035"/>
    </ligand>
</feature>
<feature type="binding site" evidence="1">
    <location>
        <position position="450"/>
    </location>
    <ligand>
        <name>Mn(2+)</name>
        <dbReference type="ChEBI" id="CHEBI:29035"/>
    </ligand>
</feature>
<dbReference type="EC" id="5.3.1.4" evidence="1"/>
<dbReference type="EMBL" id="CP000901">
    <property type="protein sequence ID" value="ABX87809.1"/>
    <property type="molecule type" value="Genomic_DNA"/>
</dbReference>
<dbReference type="RefSeq" id="WP_002210591.1">
    <property type="nucleotide sequence ID" value="NZ_CP009935.1"/>
</dbReference>
<dbReference type="SMR" id="A9R8V1"/>
<dbReference type="GeneID" id="57976417"/>
<dbReference type="KEGG" id="ypg:YpAngola_A2259"/>
<dbReference type="PATRIC" id="fig|349746.12.peg.3267"/>
<dbReference type="UniPathway" id="UPA00145">
    <property type="reaction ID" value="UER00565"/>
</dbReference>
<dbReference type="GO" id="GO:0005829">
    <property type="term" value="C:cytosol"/>
    <property type="evidence" value="ECO:0007669"/>
    <property type="project" value="TreeGrafter"/>
</dbReference>
<dbReference type="GO" id="GO:0008733">
    <property type="term" value="F:L-arabinose isomerase activity"/>
    <property type="evidence" value="ECO:0007669"/>
    <property type="project" value="UniProtKB-UniRule"/>
</dbReference>
<dbReference type="GO" id="GO:0030145">
    <property type="term" value="F:manganese ion binding"/>
    <property type="evidence" value="ECO:0007669"/>
    <property type="project" value="UniProtKB-UniRule"/>
</dbReference>
<dbReference type="GO" id="GO:0019569">
    <property type="term" value="P:L-arabinose catabolic process to xylulose 5-phosphate"/>
    <property type="evidence" value="ECO:0007669"/>
    <property type="project" value="UniProtKB-UniRule"/>
</dbReference>
<dbReference type="CDD" id="cd03557">
    <property type="entry name" value="L-arabinose_isomerase"/>
    <property type="match status" value="1"/>
</dbReference>
<dbReference type="FunFam" id="3.40.50.10940:FF:000001">
    <property type="entry name" value="L-arabinose isomerase"/>
    <property type="match status" value="1"/>
</dbReference>
<dbReference type="Gene3D" id="3.40.50.10940">
    <property type="match status" value="1"/>
</dbReference>
<dbReference type="HAMAP" id="MF_00519">
    <property type="entry name" value="Arabinose_Isome"/>
    <property type="match status" value="1"/>
</dbReference>
<dbReference type="InterPro" id="IPR024664">
    <property type="entry name" value="Ara_Isoase_C"/>
</dbReference>
<dbReference type="InterPro" id="IPR055390">
    <property type="entry name" value="AraA_central"/>
</dbReference>
<dbReference type="InterPro" id="IPR055389">
    <property type="entry name" value="AraA_N"/>
</dbReference>
<dbReference type="InterPro" id="IPR038583">
    <property type="entry name" value="AraA_N_sf"/>
</dbReference>
<dbReference type="InterPro" id="IPR004216">
    <property type="entry name" value="Fuc/Ara_isomerase_C"/>
</dbReference>
<dbReference type="InterPro" id="IPR009015">
    <property type="entry name" value="Fucose_isomerase_N/cen_sf"/>
</dbReference>
<dbReference type="InterPro" id="IPR003762">
    <property type="entry name" value="Lara_isomerase"/>
</dbReference>
<dbReference type="NCBIfam" id="NF002795">
    <property type="entry name" value="PRK02929.1"/>
    <property type="match status" value="1"/>
</dbReference>
<dbReference type="PANTHER" id="PTHR38464">
    <property type="entry name" value="L-ARABINOSE ISOMERASE"/>
    <property type="match status" value="1"/>
</dbReference>
<dbReference type="PANTHER" id="PTHR38464:SF1">
    <property type="entry name" value="L-ARABINOSE ISOMERASE"/>
    <property type="match status" value="1"/>
</dbReference>
<dbReference type="Pfam" id="PF24856">
    <property type="entry name" value="AraA_central"/>
    <property type="match status" value="1"/>
</dbReference>
<dbReference type="Pfam" id="PF02610">
    <property type="entry name" value="AraA_N"/>
    <property type="match status" value="1"/>
</dbReference>
<dbReference type="Pfam" id="PF11762">
    <property type="entry name" value="Arabinose_Iso_C"/>
    <property type="match status" value="1"/>
</dbReference>
<dbReference type="PIRSF" id="PIRSF001478">
    <property type="entry name" value="L-ara_isomerase"/>
    <property type="match status" value="1"/>
</dbReference>
<dbReference type="SUPFAM" id="SSF50443">
    <property type="entry name" value="FucI/AraA C-terminal domain-like"/>
    <property type="match status" value="1"/>
</dbReference>
<dbReference type="SUPFAM" id="SSF53743">
    <property type="entry name" value="FucI/AraA N-terminal and middle domains"/>
    <property type="match status" value="1"/>
</dbReference>
<comment type="function">
    <text evidence="1">Catalyzes the conversion of L-arabinose to L-ribulose.</text>
</comment>
<comment type="catalytic activity">
    <reaction evidence="1">
        <text>beta-L-arabinopyranose = L-ribulose</text>
        <dbReference type="Rhea" id="RHEA:14821"/>
        <dbReference type="ChEBI" id="CHEBI:16880"/>
        <dbReference type="ChEBI" id="CHEBI:40886"/>
        <dbReference type="EC" id="5.3.1.4"/>
    </reaction>
</comment>
<comment type="cofactor">
    <cofactor evidence="1">
        <name>Mn(2+)</name>
        <dbReference type="ChEBI" id="CHEBI:29035"/>
    </cofactor>
    <text evidence="1">Binds 1 Mn(2+) ion per subunit.</text>
</comment>
<comment type="pathway">
    <text evidence="1">Carbohydrate degradation; L-arabinose degradation via L-ribulose; D-xylulose 5-phosphate from L-arabinose (bacterial route): step 1/3.</text>
</comment>
<comment type="subunit">
    <text evidence="1">Homohexamer.</text>
</comment>
<comment type="similarity">
    <text evidence="1">Belongs to the arabinose isomerase family.</text>
</comment>
<sequence>MDVFKQSEVWFVIGSQNLYGPKTLQQVMDNAHQVVNSLNNEAGLPVKLVLKPLVTTPDEITALCREANYDTACIGIMTWLHTFSPAKMWIGGLSILNKPLLQFHTQFNAQIPWKTMDMDFMNLNQTAHGGREFGFIGARMRQQHSVITGHWQDKEAHQRIGQWMRVAAAKQESQQLKVARFGDNMREVAVTEGDKVAAQIQFGYSVNAYGIGDLVAVVDAVSKGDIDTLVEEYEATYRFTDAVKLNGDKRENLLDAARIELGMTRFLEQGGFKAFTTNFENLYGLKQLPGLAVQRLMQQGYGFGGEGDWKTAALLRILKVMGTGLKGGTSFMEDYTYNFQPGNDLVVGSHMLEVCPSIAKEEKPLLDVQHLGIGGKADPARLIFSTPAGPALNASLIDMGNRFRLLVNVVDTVEQPHPLPKLPVARAIWQAQPSLATAAEAWIIAGGAHHTVFSQAVGVDELRLYAEMHGIEFLLIDNDTTLPAFKNEIRWNEVYYQLNR</sequence>
<protein>
    <recommendedName>
        <fullName evidence="1">L-arabinose isomerase</fullName>
        <ecNumber evidence="1">5.3.1.4</ecNumber>
    </recommendedName>
</protein>
<accession>A9R8V1</accession>
<proteinExistence type="inferred from homology"/>
<reference key="1">
    <citation type="journal article" date="2010" name="J. Bacteriol.">
        <title>Genome sequence of the deep-rooted Yersinia pestis strain Angola reveals new insights into the evolution and pangenome of the plague bacterium.</title>
        <authorList>
            <person name="Eppinger M."/>
            <person name="Worsham P.L."/>
            <person name="Nikolich M.P."/>
            <person name="Riley D.R."/>
            <person name="Sebastian Y."/>
            <person name="Mou S."/>
            <person name="Achtman M."/>
            <person name="Lindler L.E."/>
            <person name="Ravel J."/>
        </authorList>
    </citation>
    <scope>NUCLEOTIDE SEQUENCE [LARGE SCALE GENOMIC DNA]</scope>
    <source>
        <strain>Angola</strain>
    </source>
</reference>
<name>ARAA_YERPG</name>
<keyword id="KW-0054">Arabinose catabolism</keyword>
<keyword id="KW-0119">Carbohydrate metabolism</keyword>
<keyword id="KW-0413">Isomerase</keyword>
<keyword id="KW-0464">Manganese</keyword>
<keyword id="KW-0479">Metal-binding</keyword>
<evidence type="ECO:0000255" key="1">
    <source>
        <dbReference type="HAMAP-Rule" id="MF_00519"/>
    </source>
</evidence>
<gene>
    <name evidence="1" type="primary">araA</name>
    <name type="ordered locus">YpAngola_A2259</name>
</gene>